<evidence type="ECO:0000255" key="1">
    <source>
        <dbReference type="HAMAP-Rule" id="MF_00178"/>
    </source>
</evidence>
<gene>
    <name evidence="1" type="primary">ribH</name>
    <name type="ordered locus">Smlt0729</name>
</gene>
<proteinExistence type="inferred from homology"/>
<protein>
    <recommendedName>
        <fullName evidence="1">6,7-dimethyl-8-ribityllumazine synthase</fullName>
        <shortName evidence="1">DMRL synthase</shortName>
        <shortName evidence="1">LS</shortName>
        <shortName evidence="1">Lumazine synthase</shortName>
        <ecNumber evidence="1">2.5.1.78</ecNumber>
    </recommendedName>
</protein>
<organism>
    <name type="scientific">Stenotrophomonas maltophilia (strain K279a)</name>
    <dbReference type="NCBI Taxonomy" id="522373"/>
    <lineage>
        <taxon>Bacteria</taxon>
        <taxon>Pseudomonadati</taxon>
        <taxon>Pseudomonadota</taxon>
        <taxon>Gammaproteobacteria</taxon>
        <taxon>Lysobacterales</taxon>
        <taxon>Lysobacteraceae</taxon>
        <taxon>Stenotrophomonas</taxon>
        <taxon>Stenotrophomonas maltophilia group</taxon>
    </lineage>
</organism>
<feature type="chain" id="PRO_1000098235" description="6,7-dimethyl-8-ribityllumazine synthase">
    <location>
        <begin position="1"/>
        <end position="155"/>
    </location>
</feature>
<feature type="active site" description="Proton donor" evidence="1">
    <location>
        <position position="89"/>
    </location>
</feature>
<feature type="binding site" evidence="1">
    <location>
        <position position="23"/>
    </location>
    <ligand>
        <name>5-amino-6-(D-ribitylamino)uracil</name>
        <dbReference type="ChEBI" id="CHEBI:15934"/>
    </ligand>
</feature>
<feature type="binding site" evidence="1">
    <location>
        <begin position="57"/>
        <end position="59"/>
    </location>
    <ligand>
        <name>5-amino-6-(D-ribitylamino)uracil</name>
        <dbReference type="ChEBI" id="CHEBI:15934"/>
    </ligand>
</feature>
<feature type="binding site" evidence="1">
    <location>
        <begin position="81"/>
        <end position="83"/>
    </location>
    <ligand>
        <name>5-amino-6-(D-ribitylamino)uracil</name>
        <dbReference type="ChEBI" id="CHEBI:15934"/>
    </ligand>
</feature>
<feature type="binding site" evidence="1">
    <location>
        <begin position="86"/>
        <end position="87"/>
    </location>
    <ligand>
        <name>(2S)-2-hydroxy-3-oxobutyl phosphate</name>
        <dbReference type="ChEBI" id="CHEBI:58830"/>
    </ligand>
</feature>
<feature type="binding site" evidence="1">
    <location>
        <position position="114"/>
    </location>
    <ligand>
        <name>5-amino-6-(D-ribitylamino)uracil</name>
        <dbReference type="ChEBI" id="CHEBI:15934"/>
    </ligand>
</feature>
<feature type="binding site" evidence="1">
    <location>
        <position position="128"/>
    </location>
    <ligand>
        <name>(2S)-2-hydroxy-3-oxobutyl phosphate</name>
        <dbReference type="ChEBI" id="CHEBI:58830"/>
    </ligand>
</feature>
<comment type="function">
    <text evidence="1">Catalyzes the formation of 6,7-dimethyl-8-ribityllumazine by condensation of 5-amino-6-(D-ribitylamino)uracil with 3,4-dihydroxy-2-butanone 4-phosphate. This is the penultimate step in the biosynthesis of riboflavin.</text>
</comment>
<comment type="catalytic activity">
    <reaction evidence="1">
        <text>(2S)-2-hydroxy-3-oxobutyl phosphate + 5-amino-6-(D-ribitylamino)uracil = 6,7-dimethyl-8-(1-D-ribityl)lumazine + phosphate + 2 H2O + H(+)</text>
        <dbReference type="Rhea" id="RHEA:26152"/>
        <dbReference type="ChEBI" id="CHEBI:15377"/>
        <dbReference type="ChEBI" id="CHEBI:15378"/>
        <dbReference type="ChEBI" id="CHEBI:15934"/>
        <dbReference type="ChEBI" id="CHEBI:43474"/>
        <dbReference type="ChEBI" id="CHEBI:58201"/>
        <dbReference type="ChEBI" id="CHEBI:58830"/>
        <dbReference type="EC" id="2.5.1.78"/>
    </reaction>
</comment>
<comment type="pathway">
    <text evidence="1">Cofactor biosynthesis; riboflavin biosynthesis; riboflavin from 2-hydroxy-3-oxobutyl phosphate and 5-amino-6-(D-ribitylamino)uracil: step 1/2.</text>
</comment>
<comment type="subunit">
    <text evidence="1">Forms an icosahedral capsid composed of 60 subunits, arranged as a dodecamer of pentamers.</text>
</comment>
<comment type="similarity">
    <text evidence="1">Belongs to the DMRL synthase family.</text>
</comment>
<accession>B2FNL3</accession>
<reference key="1">
    <citation type="journal article" date="2008" name="Genome Biol.">
        <title>The complete genome, comparative and functional analysis of Stenotrophomonas maltophilia reveals an organism heavily shielded by drug resistance determinants.</title>
        <authorList>
            <person name="Crossman L.C."/>
            <person name="Gould V.C."/>
            <person name="Dow J.M."/>
            <person name="Vernikos G.S."/>
            <person name="Okazaki A."/>
            <person name="Sebaihia M."/>
            <person name="Saunders D."/>
            <person name="Arrowsmith C."/>
            <person name="Carver T."/>
            <person name="Peters N."/>
            <person name="Adlem E."/>
            <person name="Kerhornou A."/>
            <person name="Lord A."/>
            <person name="Murphy L."/>
            <person name="Seeger K."/>
            <person name="Squares R."/>
            <person name="Rutter S."/>
            <person name="Quail M.A."/>
            <person name="Rajandream M.A."/>
            <person name="Harris D."/>
            <person name="Churcher C."/>
            <person name="Bentley S.D."/>
            <person name="Parkhill J."/>
            <person name="Thomson N.R."/>
            <person name="Avison M.B."/>
        </authorList>
    </citation>
    <scope>NUCLEOTIDE SEQUENCE [LARGE SCALE GENOMIC DNA]</scope>
    <source>
        <strain>K279a</strain>
    </source>
</reference>
<sequence>MSHYEGDLRTPESARFAILASRWNARITDTLVAGARQSLAGNGIAEANIDVIRVPGAWELPLVAARLAAAHEHAAILTLGCVIRGDTRHYEHVADRCAEGLMRVQLDFGVPVLNGVLAVERVEDAEARAGGSHGNKGEEVALAALEMVNLLEQLP</sequence>
<name>RISB_STRMK</name>
<dbReference type="EC" id="2.5.1.78" evidence="1"/>
<dbReference type="EMBL" id="AM743169">
    <property type="protein sequence ID" value="CAQ44308.1"/>
    <property type="molecule type" value="Genomic_DNA"/>
</dbReference>
<dbReference type="RefSeq" id="WP_012479138.1">
    <property type="nucleotide sequence ID" value="NC_010943.1"/>
</dbReference>
<dbReference type="SMR" id="B2FNL3"/>
<dbReference type="EnsemblBacteria" id="CAQ44308">
    <property type="protein sequence ID" value="CAQ44308"/>
    <property type="gene ID" value="Smlt0729"/>
</dbReference>
<dbReference type="GeneID" id="93706185"/>
<dbReference type="KEGG" id="sml:Smlt0729"/>
<dbReference type="PATRIC" id="fig|522373.3.peg.696"/>
<dbReference type="eggNOG" id="COG0054">
    <property type="taxonomic scope" value="Bacteria"/>
</dbReference>
<dbReference type="HOGENOM" id="CLU_089358_1_2_6"/>
<dbReference type="UniPathway" id="UPA00275">
    <property type="reaction ID" value="UER00404"/>
</dbReference>
<dbReference type="Proteomes" id="UP000008840">
    <property type="component" value="Chromosome"/>
</dbReference>
<dbReference type="GO" id="GO:0005829">
    <property type="term" value="C:cytosol"/>
    <property type="evidence" value="ECO:0007669"/>
    <property type="project" value="TreeGrafter"/>
</dbReference>
<dbReference type="GO" id="GO:0009349">
    <property type="term" value="C:riboflavin synthase complex"/>
    <property type="evidence" value="ECO:0007669"/>
    <property type="project" value="InterPro"/>
</dbReference>
<dbReference type="GO" id="GO:0000906">
    <property type="term" value="F:6,7-dimethyl-8-ribityllumazine synthase activity"/>
    <property type="evidence" value="ECO:0007669"/>
    <property type="project" value="UniProtKB-UniRule"/>
</dbReference>
<dbReference type="GO" id="GO:0009231">
    <property type="term" value="P:riboflavin biosynthetic process"/>
    <property type="evidence" value="ECO:0007669"/>
    <property type="project" value="UniProtKB-UniRule"/>
</dbReference>
<dbReference type="CDD" id="cd09209">
    <property type="entry name" value="Lumazine_synthase-I"/>
    <property type="match status" value="1"/>
</dbReference>
<dbReference type="Gene3D" id="3.40.50.960">
    <property type="entry name" value="Lumazine/riboflavin synthase"/>
    <property type="match status" value="1"/>
</dbReference>
<dbReference type="HAMAP" id="MF_00178">
    <property type="entry name" value="Lumazine_synth"/>
    <property type="match status" value="1"/>
</dbReference>
<dbReference type="InterPro" id="IPR034964">
    <property type="entry name" value="LS"/>
</dbReference>
<dbReference type="InterPro" id="IPR002180">
    <property type="entry name" value="LS/RS"/>
</dbReference>
<dbReference type="InterPro" id="IPR036467">
    <property type="entry name" value="LS/RS_sf"/>
</dbReference>
<dbReference type="NCBIfam" id="TIGR00114">
    <property type="entry name" value="lumazine-synth"/>
    <property type="match status" value="1"/>
</dbReference>
<dbReference type="PANTHER" id="PTHR21058:SF0">
    <property type="entry name" value="6,7-DIMETHYL-8-RIBITYLLUMAZINE SYNTHASE"/>
    <property type="match status" value="1"/>
</dbReference>
<dbReference type="PANTHER" id="PTHR21058">
    <property type="entry name" value="6,7-DIMETHYL-8-RIBITYLLUMAZINE SYNTHASE DMRL SYNTHASE LUMAZINE SYNTHASE"/>
    <property type="match status" value="1"/>
</dbReference>
<dbReference type="Pfam" id="PF00885">
    <property type="entry name" value="DMRL_synthase"/>
    <property type="match status" value="1"/>
</dbReference>
<dbReference type="SUPFAM" id="SSF52121">
    <property type="entry name" value="Lumazine synthase"/>
    <property type="match status" value="1"/>
</dbReference>
<keyword id="KW-1185">Reference proteome</keyword>
<keyword id="KW-0686">Riboflavin biosynthesis</keyword>
<keyword id="KW-0808">Transferase</keyword>